<proteinExistence type="evidence at protein level"/>
<organism>
    <name type="scientific">Homo sapiens</name>
    <name type="common">Human</name>
    <dbReference type="NCBI Taxonomy" id="9606"/>
    <lineage>
        <taxon>Eukaryota</taxon>
        <taxon>Metazoa</taxon>
        <taxon>Chordata</taxon>
        <taxon>Craniata</taxon>
        <taxon>Vertebrata</taxon>
        <taxon>Euteleostomi</taxon>
        <taxon>Mammalia</taxon>
        <taxon>Eutheria</taxon>
        <taxon>Euarchontoglires</taxon>
        <taxon>Primates</taxon>
        <taxon>Haplorrhini</taxon>
        <taxon>Catarrhini</taxon>
        <taxon>Hominidae</taxon>
        <taxon>Homo</taxon>
    </lineage>
</organism>
<name>UBP18_HUMAN</name>
<evidence type="ECO:0000255" key="1"/>
<evidence type="ECO:0000255" key="2">
    <source>
        <dbReference type="PROSITE-ProRule" id="PRU10092"/>
    </source>
</evidence>
<evidence type="ECO:0000255" key="3">
    <source>
        <dbReference type="PROSITE-ProRule" id="PRU10093"/>
    </source>
</evidence>
<evidence type="ECO:0000256" key="4">
    <source>
        <dbReference type="SAM" id="MobiDB-lite"/>
    </source>
</evidence>
<evidence type="ECO:0000269" key="5">
    <source>
    </source>
</evidence>
<evidence type="ECO:0000269" key="6">
    <source>
    </source>
</evidence>
<evidence type="ECO:0000269" key="7">
    <source>
    </source>
</evidence>
<evidence type="ECO:0000269" key="8">
    <source>
    </source>
</evidence>
<evidence type="ECO:0000269" key="9">
    <source>
    </source>
</evidence>
<evidence type="ECO:0000269" key="10">
    <source>
    </source>
</evidence>
<evidence type="ECO:0000269" key="11">
    <source>
    </source>
</evidence>
<evidence type="ECO:0000269" key="12">
    <source>
    </source>
</evidence>
<evidence type="ECO:0000269" key="13">
    <source>
    </source>
</evidence>
<evidence type="ECO:0000269" key="14">
    <source ref="7"/>
</evidence>
<evidence type="ECO:0000305" key="15"/>
<feature type="chain" id="PRO_0000080644" description="Ubl carboxyl-terminal hydrolase 18">
    <location>
        <begin position="1"/>
        <end position="372"/>
    </location>
</feature>
<feature type="domain" description="USP" evidence="1">
    <location>
        <begin position="55"/>
        <end position="370"/>
    </location>
</feature>
<feature type="region of interest" description="Disordered" evidence="4">
    <location>
        <begin position="19"/>
        <end position="45"/>
    </location>
</feature>
<feature type="region of interest" description="Mediates interaction with IFNAR2" evidence="11">
    <location>
        <begin position="36"/>
        <end position="51"/>
    </location>
</feature>
<feature type="region of interest" description="Mediates interaction with STAT2" evidence="11">
    <location>
        <begin position="51"/>
        <end position="112"/>
    </location>
</feature>
<feature type="region of interest" description="Mediates interaction with STAT2 and necessary for the negative regulation of the type I IFN signaling pathway" evidence="11">
    <location>
        <begin position="303"/>
        <end position="312"/>
    </location>
</feature>
<feature type="region of interest" description="Mediates interaction with IFNAR2" evidence="11">
    <location>
        <begin position="313"/>
        <end position="372"/>
    </location>
</feature>
<feature type="compositionally biased region" description="Basic and acidic residues" evidence="4">
    <location>
        <begin position="26"/>
        <end position="45"/>
    </location>
</feature>
<feature type="active site" description="Nucleophile" evidence="2 3">
    <location>
        <position position="64"/>
    </location>
</feature>
<feature type="active site" description="Proton acceptor" evidence="2 3">
    <location>
        <position position="318"/>
    </location>
</feature>
<feature type="splice variant" id="VSP_055236" description="In isoform 2." evidence="15">
    <original>MSKAFGLLRQICQSIL</original>
    <variation>M</variation>
    <location>
        <begin position="1"/>
        <end position="16"/>
    </location>
</feature>
<feature type="sequence variant" id="VAR_024589" description="In dbSNP:rs3180408." evidence="14">
    <original>T</original>
    <variation>M</variation>
    <location>
        <position position="169"/>
    </location>
</feature>
<feature type="sequence variant" id="VAR_078772" description="In PTORCH2." evidence="9">
    <location>
        <begin position="218"/>
        <end position="372"/>
    </location>
</feature>
<feature type="mutagenesis site" description="Abolishes deubiquitinating activity." evidence="8">
    <original>C</original>
    <variation>S</variation>
    <location>
        <position position="64"/>
    </location>
</feature>
<feature type="sequence conflict" description="In Ref. 2; CAB76398." evidence="15" ref="2">
    <original>F</original>
    <variation>S</variation>
    <location>
        <position position="332"/>
    </location>
</feature>
<protein>
    <recommendedName>
        <fullName>Ubl carboxyl-terminal hydrolase 18</fullName>
        <ecNumber evidence="8">3.4.19.12</ecNumber>
    </recommendedName>
    <alternativeName>
        <fullName>43 kDa ISG15-specific protease</fullName>
        <shortName>hUBP43</shortName>
    </alternativeName>
    <alternativeName>
        <fullName>ISG15-specific-processing protease</fullName>
    </alternativeName>
    <alternativeName>
        <fullName>Ubl thioesterase 18</fullName>
    </alternativeName>
</protein>
<reference key="1">
    <citation type="submission" date="1999-08" db="EMBL/GenBank/DDBJ databases">
        <title>RNase-L-dependent regulation of a novel interferon-stimulated gene: feedback inhibition of the interferon response.</title>
        <authorList>
            <person name="Li X.-L."/>
            <person name="Blackford J.A."/>
            <person name="Judge C.S."/>
            <person name="Liu M."/>
            <person name="Xiao W."/>
            <person name="Kalvakolanu D.V."/>
            <person name="Hassel B.A."/>
        </authorList>
    </citation>
    <scope>NUCLEOTIDE SEQUENCE [MRNA] (ISOFORM 1)</scope>
</reference>
<reference key="2">
    <citation type="journal article" date="2000" name="Genomics">
        <title>Cloning and characterization of a novel human ubiquitin-specific protease, a homologue of murine UBP43 (Usp18).</title>
        <authorList>
            <person name="Schwer H."/>
            <person name="Liu L.Q."/>
            <person name="Zhou L."/>
            <person name="Little M.T."/>
            <person name="Pan Z."/>
            <person name="Hetherington C.J."/>
        </authorList>
    </citation>
    <scope>NUCLEOTIDE SEQUENCE [MRNA] (ISOFORM 1)</scope>
</reference>
<reference key="3">
    <citation type="journal article" date="2001" name="Genome Res.">
        <title>Towards a catalog of human genes and proteins: sequencing and analysis of 500 novel complete protein coding human cDNAs.</title>
        <authorList>
            <person name="Wiemann S."/>
            <person name="Weil B."/>
            <person name="Wellenreuther R."/>
            <person name="Gassenhuber J."/>
            <person name="Glassl S."/>
            <person name="Ansorge W."/>
            <person name="Boecher M."/>
            <person name="Bloecker H."/>
            <person name="Bauersachs S."/>
            <person name="Blum H."/>
            <person name="Lauber J."/>
            <person name="Duesterhoeft A."/>
            <person name="Beyer A."/>
            <person name="Koehrer K."/>
            <person name="Strack N."/>
            <person name="Mewes H.-W."/>
            <person name="Ottenwaelder B."/>
            <person name="Obermaier B."/>
            <person name="Tampe J."/>
            <person name="Heubner D."/>
            <person name="Wambutt R."/>
            <person name="Korn B."/>
            <person name="Klein M."/>
            <person name="Poustka A."/>
        </authorList>
    </citation>
    <scope>NUCLEOTIDE SEQUENCE [LARGE SCALE MRNA] (ISOFORM 1)</scope>
    <source>
        <tissue>Brain</tissue>
    </source>
</reference>
<reference key="4">
    <citation type="submission" date="2003-05" db="EMBL/GenBank/DDBJ databases">
        <title>Cloning of human full-length CDSs in BD Creator(TM) system donor vector.</title>
        <authorList>
            <person name="Kalnine N."/>
            <person name="Chen X."/>
            <person name="Rolfs A."/>
            <person name="Halleck A."/>
            <person name="Hines L."/>
            <person name="Eisenstein S."/>
            <person name="Koundinya M."/>
            <person name="Raphael J."/>
            <person name="Moreira D."/>
            <person name="Kelley T."/>
            <person name="LaBaer J."/>
            <person name="Lin Y."/>
            <person name="Phelan M."/>
            <person name="Farmer A."/>
        </authorList>
    </citation>
    <scope>NUCLEOTIDE SEQUENCE [LARGE SCALE MRNA] (ISOFORM 1)</scope>
</reference>
<reference key="5">
    <citation type="journal article" date="2004" name="Genome Biol.">
        <title>A genome annotation-driven approach to cloning the human ORFeome.</title>
        <authorList>
            <person name="Collins J.E."/>
            <person name="Wright C.L."/>
            <person name="Edwards C.A."/>
            <person name="Davis M.P."/>
            <person name="Grinham J.A."/>
            <person name="Cole C.G."/>
            <person name="Goward M.E."/>
            <person name="Aguado B."/>
            <person name="Mallya M."/>
            <person name="Mokrab Y."/>
            <person name="Huckle E.J."/>
            <person name="Beare D.M."/>
            <person name="Dunham I."/>
        </authorList>
    </citation>
    <scope>NUCLEOTIDE SEQUENCE [LARGE SCALE MRNA] (ISOFORM 1)</scope>
</reference>
<reference key="6">
    <citation type="journal article" date="2004" name="Nat. Genet.">
        <title>Complete sequencing and characterization of 21,243 full-length human cDNAs.</title>
        <authorList>
            <person name="Ota T."/>
            <person name="Suzuki Y."/>
            <person name="Nishikawa T."/>
            <person name="Otsuki T."/>
            <person name="Sugiyama T."/>
            <person name="Irie R."/>
            <person name="Wakamatsu A."/>
            <person name="Hayashi K."/>
            <person name="Sato H."/>
            <person name="Nagai K."/>
            <person name="Kimura K."/>
            <person name="Makita H."/>
            <person name="Sekine M."/>
            <person name="Obayashi M."/>
            <person name="Nishi T."/>
            <person name="Shibahara T."/>
            <person name="Tanaka T."/>
            <person name="Ishii S."/>
            <person name="Yamamoto J."/>
            <person name="Saito K."/>
            <person name="Kawai Y."/>
            <person name="Isono Y."/>
            <person name="Nakamura Y."/>
            <person name="Nagahari K."/>
            <person name="Murakami K."/>
            <person name="Yasuda T."/>
            <person name="Iwayanagi T."/>
            <person name="Wagatsuma M."/>
            <person name="Shiratori A."/>
            <person name="Sudo H."/>
            <person name="Hosoiri T."/>
            <person name="Kaku Y."/>
            <person name="Kodaira H."/>
            <person name="Kondo H."/>
            <person name="Sugawara M."/>
            <person name="Takahashi M."/>
            <person name="Kanda K."/>
            <person name="Yokoi T."/>
            <person name="Furuya T."/>
            <person name="Kikkawa E."/>
            <person name="Omura Y."/>
            <person name="Abe K."/>
            <person name="Kamihara K."/>
            <person name="Katsuta N."/>
            <person name="Sato K."/>
            <person name="Tanikawa M."/>
            <person name="Yamazaki M."/>
            <person name="Ninomiya K."/>
            <person name="Ishibashi T."/>
            <person name="Yamashita H."/>
            <person name="Murakawa K."/>
            <person name="Fujimori K."/>
            <person name="Tanai H."/>
            <person name="Kimata M."/>
            <person name="Watanabe M."/>
            <person name="Hiraoka S."/>
            <person name="Chiba Y."/>
            <person name="Ishida S."/>
            <person name="Ono Y."/>
            <person name="Takiguchi S."/>
            <person name="Watanabe S."/>
            <person name="Yosida M."/>
            <person name="Hotuta T."/>
            <person name="Kusano J."/>
            <person name="Kanehori K."/>
            <person name="Takahashi-Fujii A."/>
            <person name="Hara H."/>
            <person name="Tanase T.-O."/>
            <person name="Nomura Y."/>
            <person name="Togiya S."/>
            <person name="Komai F."/>
            <person name="Hara R."/>
            <person name="Takeuchi K."/>
            <person name="Arita M."/>
            <person name="Imose N."/>
            <person name="Musashino K."/>
            <person name="Yuuki H."/>
            <person name="Oshima A."/>
            <person name="Sasaki N."/>
            <person name="Aotsuka S."/>
            <person name="Yoshikawa Y."/>
            <person name="Matsunawa H."/>
            <person name="Ichihara T."/>
            <person name="Shiohata N."/>
            <person name="Sano S."/>
            <person name="Moriya S."/>
            <person name="Momiyama H."/>
            <person name="Satoh N."/>
            <person name="Takami S."/>
            <person name="Terashima Y."/>
            <person name="Suzuki O."/>
            <person name="Nakagawa S."/>
            <person name="Senoh A."/>
            <person name="Mizoguchi H."/>
            <person name="Goto Y."/>
            <person name="Shimizu F."/>
            <person name="Wakebe H."/>
            <person name="Hishigaki H."/>
            <person name="Watanabe T."/>
            <person name="Sugiyama A."/>
            <person name="Takemoto M."/>
            <person name="Kawakami B."/>
            <person name="Yamazaki M."/>
            <person name="Watanabe K."/>
            <person name="Kumagai A."/>
            <person name="Itakura S."/>
            <person name="Fukuzumi Y."/>
            <person name="Fujimori Y."/>
            <person name="Komiyama M."/>
            <person name="Tashiro H."/>
            <person name="Tanigami A."/>
            <person name="Fujiwara T."/>
            <person name="Ono T."/>
            <person name="Yamada K."/>
            <person name="Fujii Y."/>
            <person name="Ozaki K."/>
            <person name="Hirao M."/>
            <person name="Ohmori Y."/>
            <person name="Kawabata A."/>
            <person name="Hikiji T."/>
            <person name="Kobatake N."/>
            <person name="Inagaki H."/>
            <person name="Ikema Y."/>
            <person name="Okamoto S."/>
            <person name="Okitani R."/>
            <person name="Kawakami T."/>
            <person name="Noguchi S."/>
            <person name="Itoh T."/>
            <person name="Shigeta K."/>
            <person name="Senba T."/>
            <person name="Matsumura K."/>
            <person name="Nakajima Y."/>
            <person name="Mizuno T."/>
            <person name="Morinaga M."/>
            <person name="Sasaki M."/>
            <person name="Togashi T."/>
            <person name="Oyama M."/>
            <person name="Hata H."/>
            <person name="Watanabe M."/>
            <person name="Komatsu T."/>
            <person name="Mizushima-Sugano J."/>
            <person name="Satoh T."/>
            <person name="Shirai Y."/>
            <person name="Takahashi Y."/>
            <person name="Nakagawa K."/>
            <person name="Okumura K."/>
            <person name="Nagase T."/>
            <person name="Nomura N."/>
            <person name="Kikuchi H."/>
            <person name="Masuho Y."/>
            <person name="Yamashita R."/>
            <person name="Nakai K."/>
            <person name="Yada T."/>
            <person name="Nakamura Y."/>
            <person name="Ohara O."/>
            <person name="Isogai T."/>
            <person name="Sugano S."/>
        </authorList>
    </citation>
    <scope>NUCLEOTIDE SEQUENCE [LARGE SCALE MRNA] (ISOFORM 1)</scope>
    <source>
        <tissue>Ovary</tissue>
    </source>
</reference>
<reference key="7">
    <citation type="submission" date="2004-06" db="EMBL/GenBank/DDBJ databases">
        <title>Cloning of human full open reading frames in Gateway(TM) system entry vector (pDONR201).</title>
        <authorList>
            <person name="Ebert L."/>
            <person name="Schick M."/>
            <person name="Neubert P."/>
            <person name="Schatten R."/>
            <person name="Henze S."/>
            <person name="Korn B."/>
        </authorList>
    </citation>
    <scope>NUCLEOTIDE SEQUENCE [LARGE SCALE MRNA] (ISOFORM 1)</scope>
    <scope>VARIANT MET-169</scope>
</reference>
<reference key="8">
    <citation type="journal article" date="2004" name="Genome Res.">
        <title>The status, quality, and expansion of the NIH full-length cDNA project: the Mammalian Gene Collection (MGC).</title>
        <authorList>
            <consortium name="The MGC Project Team"/>
        </authorList>
    </citation>
    <scope>NUCLEOTIDE SEQUENCE [LARGE SCALE MRNA] (ISOFORM 1)</scope>
    <source>
        <tissue>Uterus</tissue>
    </source>
</reference>
<reference key="9">
    <citation type="journal article" date="2001" name="Gene">
        <title>Cloning and characterization of human ubiquitin-processing protease-43 from terminally differentiated human melanoma cells using a rapid subtraction hybridization protocol RaSH.</title>
        <authorList>
            <person name="Kang D."/>
            <person name="Jiang H."/>
            <person name="Wu Q."/>
            <person name="Pestka S."/>
            <person name="Fisher P.B."/>
        </authorList>
    </citation>
    <scope>INDUCTION BY TYPE I INTERFERON</scope>
</reference>
<reference key="10">
    <citation type="journal article" date="2002" name="J. Biol. Chem.">
        <title>UBP43 (USP18) specifically removes ISG15 from conjugated proteins.</title>
        <authorList>
            <person name="Malakhov M.P."/>
            <person name="Malakhova O.A."/>
            <person name="Kim K.I."/>
            <person name="Ritchie K.J."/>
            <person name="Zhang D.-E."/>
        </authorList>
    </citation>
    <scope>FUNCTION</scope>
</reference>
<reference key="11">
    <citation type="journal article" date="2012" name="J. Biol. Chem.">
        <title>Two independent mechanisms promote expression of an N-terminal truncated USP18 isoform with higher DeISGylation activity in the nucleus.</title>
        <authorList>
            <person name="Burkart C."/>
            <person name="Fan J.B."/>
            <person name="Zhang D.E."/>
        </authorList>
    </citation>
    <scope>ALTERNATIVE INITIATION (ISOFORM 2)</scope>
    <scope>CTG START CODON (ISOFORM 2)</scope>
    <scope>FUNCTION (ISOFORM 2)</scope>
    <scope>SUBCELLULAR LOCATION</scope>
</reference>
<reference key="12">
    <citation type="journal article" date="2013" name="J. Exp. Med.">
        <title>USP18 inhibits NF-kappaB and NFAT activation during Th17 differentiation by deubiquitinating the TAK1-TAB1 complex.</title>
        <authorList>
            <person name="Liu X."/>
            <person name="Li H."/>
            <person name="Zhong B."/>
            <person name="Blonska M."/>
            <person name="Gorjestani S."/>
            <person name="Yan M."/>
            <person name="Tian Q."/>
            <person name="Zhang D.E."/>
            <person name="Lin X."/>
            <person name="Dong C."/>
        </authorList>
    </citation>
    <scope>FUNCTION</scope>
    <scope>CATALYTIC ACTIVITY</scope>
    <scope>MUTAGENESIS OF CYS-64</scope>
</reference>
<reference key="13">
    <citation type="journal article" date="2016" name="J. Exp. Med.">
        <title>Human USP18 deficiency underlies type 1 interferonopathy leading to severe pseudo-TORCH syndrome.</title>
        <authorList>
            <person name="Meuwissen M.E."/>
            <person name="Schot R."/>
            <person name="Buta S."/>
            <person name="Oudesluijs G."/>
            <person name="Tinschert S."/>
            <person name="Speer S.D."/>
            <person name="Li Z."/>
            <person name="van Unen L."/>
            <person name="Heijsman D."/>
            <person name="Goldmann T."/>
            <person name="Lequin M.H."/>
            <person name="Kros J.M."/>
            <person name="Stam W."/>
            <person name="Hermann M."/>
            <person name="Willemsen R."/>
            <person name="Brouwer R.W."/>
            <person name="Van Ijcken W.F."/>
            <person name="Martin-Fernandez M."/>
            <person name="de Coo I."/>
            <person name="Dudink J."/>
            <person name="de Vries F.A."/>
            <person name="Bertoli Avella A."/>
            <person name="Prinz M."/>
            <person name="Crow Y.J."/>
            <person name="Verheijen F.W."/>
            <person name="Pellegrini S."/>
            <person name="Bogunovic D."/>
            <person name="Mancini G.M."/>
        </authorList>
    </citation>
    <scope>FUNCTION</scope>
    <scope>INVOLVEMENT IN PTORCH2</scope>
    <scope>VARIANT PTORCH2 218-GLN--CYS-372 DEL</scope>
</reference>
<reference key="14">
    <citation type="journal article" date="2016" name="Cell Res.">
        <title>USP18 recruits USP20 to promote innate antiviral response through deubiquitinating STING/MITA.</title>
        <authorList>
            <person name="Zhang M."/>
            <person name="Zhang M.X."/>
            <person name="Zhang Q."/>
            <person name="Zhu G.F."/>
            <person name="Yuan L."/>
            <person name="Zhang D.E."/>
            <person name="Zhu Q."/>
            <person name="Yao J."/>
            <person name="Shu H.B."/>
            <person name="Zhong B."/>
        </authorList>
    </citation>
    <scope>FUNCTION</scope>
    <scope>INTERACTION WITH USP20 AND STING1</scope>
</reference>
<reference key="15">
    <citation type="journal article" date="2017" name="Nat. Struct. Mol. Biol.">
        <title>STAT2 is an essential adaptor in USP18-mediated suppression of type I interferon signaling.</title>
        <authorList>
            <person name="Arimoto K.I."/>
            <person name="Loechte S."/>
            <person name="Stoner S.A."/>
            <person name="Burkart C."/>
            <person name="Zhang Y."/>
            <person name="Miyauchi S."/>
            <person name="Wilmes S."/>
            <person name="Fan J.B."/>
            <person name="Heinisch J.J."/>
            <person name="Li Z."/>
            <person name="Yan M."/>
            <person name="Pellegrini S."/>
            <person name="Colland F."/>
            <person name="Piehler J."/>
            <person name="Zhang D.E."/>
        </authorList>
    </citation>
    <scope>FUNCTION</scope>
    <scope>INTERACTION WITH IFNAR2 AND STAT2</scope>
    <scope>REGION</scope>
</reference>
<reference key="16">
    <citation type="journal article" date="2019" name="Sci. Immunol.">
        <title>Severe type I interferonopathy and unrestrained interferon signaling due to a homozygous germline mutation in STAT2.</title>
        <authorList>
            <person name="Duncan C.J.A."/>
            <person name="Thompson B.J."/>
            <person name="Chen R."/>
            <person name="Rice G.I."/>
            <person name="Gothe F."/>
            <person name="Young D.F."/>
            <person name="Lovell S.C."/>
            <person name="Shuttleworth V.G."/>
            <person name="Brocklebank V."/>
            <person name="Corner B."/>
            <person name="Skelton A.J."/>
            <person name="Bondet V."/>
            <person name="Coxhead J."/>
            <person name="Duffy D."/>
            <person name="Fourrage C."/>
            <person name="Livingston J.H."/>
            <person name="Pavaine J."/>
            <person name="Cheesman E."/>
            <person name="Bitetti S."/>
            <person name="Grainger A."/>
            <person name="Acres M."/>
            <person name="Innes B.A."/>
            <person name="Mikulasova A."/>
            <person name="Sun R."/>
            <person name="Hussain R."/>
            <person name="Wright R."/>
            <person name="Wynn R."/>
            <person name="Zarhrate M."/>
            <person name="Zeef L.A.H."/>
            <person name="Wood K."/>
            <person name="Hughes S.M."/>
            <person name="Harris C.L."/>
            <person name="Engelhardt K.R."/>
            <person name="Crow Y.J."/>
            <person name="Randall R.E."/>
            <person name="Kavanagh D."/>
            <person name="Hambleton S."/>
            <person name="Briggs T.A."/>
        </authorList>
    </citation>
    <scope>INTERACTION WITH STAT2</scope>
</reference>
<reference key="17">
    <citation type="journal article" date="2020" name="J. Exp. Med.">
        <title>Homozygous STAT2 gain-of-function mutation by loss of USP18 activity in a patient with type I interferonopathy.</title>
        <authorList>
            <person name="Gruber C."/>
            <person name="Martin-Fernandez M."/>
            <person name="Ailal F."/>
            <person name="Qiu X."/>
            <person name="Taft J."/>
            <person name="Altman J."/>
            <person name="Rosain J."/>
            <person name="Buta S."/>
            <person name="Bousfiha A."/>
            <person name="Casanova J.L."/>
            <person name="Bustamante J."/>
            <person name="Bogunovic D."/>
        </authorList>
    </citation>
    <scope>INTERACTION WITH STAT2</scope>
</reference>
<dbReference type="EC" id="3.4.19.12" evidence="8"/>
<dbReference type="EMBL" id="AF176642">
    <property type="protein sequence ID" value="AAD49967.1"/>
    <property type="molecule type" value="mRNA"/>
</dbReference>
<dbReference type="EMBL" id="AJ243526">
    <property type="protein sequence ID" value="CAB76398.1"/>
    <property type="molecule type" value="mRNA"/>
</dbReference>
<dbReference type="EMBL" id="AL136690">
    <property type="protein sequence ID" value="CAB66625.1"/>
    <property type="molecule type" value="mRNA"/>
</dbReference>
<dbReference type="EMBL" id="BT006835">
    <property type="protein sequence ID" value="AAP35481.1"/>
    <property type="molecule type" value="mRNA"/>
</dbReference>
<dbReference type="EMBL" id="CT841507">
    <property type="protein sequence ID" value="CAJ86437.1"/>
    <property type="molecule type" value="mRNA"/>
</dbReference>
<dbReference type="EMBL" id="AK313385">
    <property type="protein sequence ID" value="BAG36183.1"/>
    <property type="molecule type" value="mRNA"/>
</dbReference>
<dbReference type="EMBL" id="CR457216">
    <property type="protein sequence ID" value="CAG33497.1"/>
    <property type="molecule type" value="mRNA"/>
</dbReference>
<dbReference type="EMBL" id="BC014896">
    <property type="protein sequence ID" value="AAH14896.1"/>
    <property type="molecule type" value="mRNA"/>
</dbReference>
<dbReference type="CCDS" id="CCDS13752.1">
    <molecule id="Q9UMW8-1"/>
</dbReference>
<dbReference type="RefSeq" id="NP_059110.2">
    <molecule id="Q9UMW8-1"/>
    <property type="nucleotide sequence ID" value="NM_017414.3"/>
</dbReference>
<dbReference type="SMR" id="Q9UMW8"/>
<dbReference type="BioGRID" id="116430">
    <property type="interactions" value="58"/>
</dbReference>
<dbReference type="DIP" id="DIP-42723N"/>
<dbReference type="FunCoup" id="Q9UMW8">
    <property type="interactions" value="1504"/>
</dbReference>
<dbReference type="IntAct" id="Q9UMW8">
    <property type="interactions" value="23"/>
</dbReference>
<dbReference type="MINT" id="Q9UMW8"/>
<dbReference type="STRING" id="9606.ENSP00000215794"/>
<dbReference type="BindingDB" id="Q9UMW8"/>
<dbReference type="ChEMBL" id="CHEMBL3407317"/>
<dbReference type="MEROPS" id="C19.030"/>
<dbReference type="iPTMnet" id="Q9UMW8"/>
<dbReference type="PhosphoSitePlus" id="Q9UMW8"/>
<dbReference type="BioMuta" id="USP18"/>
<dbReference type="DMDM" id="10720335"/>
<dbReference type="jPOST" id="Q9UMW8"/>
<dbReference type="MassIVE" id="Q9UMW8"/>
<dbReference type="PaxDb" id="9606-ENSP00000215794"/>
<dbReference type="PeptideAtlas" id="Q9UMW8"/>
<dbReference type="ProteomicsDB" id="85214">
    <molecule id="Q9UMW8-1"/>
</dbReference>
<dbReference type="Antibodypedia" id="22768">
    <property type="antibodies" value="127 antibodies from 32 providers"/>
</dbReference>
<dbReference type="CPTC" id="Q9UMW8">
    <property type="antibodies" value="1 antibody"/>
</dbReference>
<dbReference type="DNASU" id="11274"/>
<dbReference type="Ensembl" id="ENST00000215794.8">
    <molecule id="Q9UMW8-1"/>
    <property type="protein sequence ID" value="ENSP00000215794.7"/>
    <property type="gene ID" value="ENSG00000184979.12"/>
</dbReference>
<dbReference type="GeneID" id="11274"/>
<dbReference type="KEGG" id="hsa:11274"/>
<dbReference type="MANE-Select" id="ENST00000215794.8">
    <property type="protein sequence ID" value="ENSP00000215794.7"/>
    <property type="RefSeq nucleotide sequence ID" value="NM_017414.4"/>
    <property type="RefSeq protein sequence ID" value="NP_059110.2"/>
</dbReference>
<dbReference type="UCSC" id="uc002zny.4">
    <molecule id="Q9UMW8-1"/>
    <property type="organism name" value="human"/>
</dbReference>
<dbReference type="AGR" id="HGNC:12616"/>
<dbReference type="CTD" id="11274"/>
<dbReference type="DisGeNET" id="11274"/>
<dbReference type="GeneCards" id="USP18"/>
<dbReference type="HGNC" id="HGNC:12616">
    <property type="gene designation" value="USP18"/>
</dbReference>
<dbReference type="HPA" id="ENSG00000184979">
    <property type="expression patterns" value="Low tissue specificity"/>
</dbReference>
<dbReference type="MalaCards" id="USP18"/>
<dbReference type="MIM" id="607057">
    <property type="type" value="gene"/>
</dbReference>
<dbReference type="MIM" id="617397">
    <property type="type" value="phenotype"/>
</dbReference>
<dbReference type="neXtProt" id="NX_Q9UMW8"/>
<dbReference type="OpenTargets" id="ENSG00000184979"/>
<dbReference type="Orphanet" id="481665">
    <property type="disease" value="USP18 deficiency"/>
</dbReference>
<dbReference type="PharmGKB" id="PA37242"/>
<dbReference type="VEuPathDB" id="HostDB:ENSG00000184979"/>
<dbReference type="eggNOG" id="KOG1863">
    <property type="taxonomic scope" value="Eukaryota"/>
</dbReference>
<dbReference type="GeneTree" id="ENSGT00940000161720"/>
<dbReference type="HOGENOM" id="CLU_062837_0_0_1"/>
<dbReference type="InParanoid" id="Q9UMW8"/>
<dbReference type="OMA" id="CGRKTPF"/>
<dbReference type="OrthoDB" id="292964at2759"/>
<dbReference type="PAN-GO" id="Q9UMW8">
    <property type="GO annotations" value="5 GO annotations based on evolutionary models"/>
</dbReference>
<dbReference type="PhylomeDB" id="Q9UMW8"/>
<dbReference type="PathwayCommons" id="Q9UMW8"/>
<dbReference type="Reactome" id="R-HSA-1169408">
    <property type="pathway name" value="ISG15 antiviral mechanism"/>
</dbReference>
<dbReference type="Reactome" id="R-HSA-445989">
    <property type="pathway name" value="TAK1-dependent IKK and NF-kappa-B activation"/>
</dbReference>
<dbReference type="Reactome" id="R-HSA-5689880">
    <property type="pathway name" value="Ub-specific processing proteases"/>
</dbReference>
<dbReference type="Reactome" id="R-HSA-912694">
    <property type="pathway name" value="Regulation of IFNA/IFNB signaling"/>
</dbReference>
<dbReference type="Reactome" id="R-HSA-9758274">
    <property type="pathway name" value="Regulation of NF-kappa B signaling"/>
</dbReference>
<dbReference type="SignaLink" id="Q9UMW8"/>
<dbReference type="BioGRID-ORCS" id="11274">
    <property type="hits" value="92 hits in 1196 CRISPR screens"/>
</dbReference>
<dbReference type="GeneWiki" id="USP18"/>
<dbReference type="GenomeRNAi" id="11274"/>
<dbReference type="Pharos" id="Q9UMW8">
    <property type="development level" value="Tbio"/>
</dbReference>
<dbReference type="PRO" id="PR:Q9UMW8"/>
<dbReference type="Proteomes" id="UP000005640">
    <property type="component" value="Chromosome 22"/>
</dbReference>
<dbReference type="RNAct" id="Q9UMW8">
    <property type="molecule type" value="protein"/>
</dbReference>
<dbReference type="Bgee" id="ENSG00000184979">
    <property type="expression patterns" value="Expressed in primordial germ cell in gonad and 106 other cell types or tissues"/>
</dbReference>
<dbReference type="GO" id="GO:0005737">
    <property type="term" value="C:cytoplasm"/>
    <property type="evidence" value="ECO:0000305"/>
    <property type="project" value="UniProt"/>
</dbReference>
<dbReference type="GO" id="GO:0005829">
    <property type="term" value="C:cytosol"/>
    <property type="evidence" value="ECO:0000314"/>
    <property type="project" value="HPA"/>
</dbReference>
<dbReference type="GO" id="GO:0043231">
    <property type="term" value="C:intracellular membrane-bounded organelle"/>
    <property type="evidence" value="ECO:0000314"/>
    <property type="project" value="HPA"/>
</dbReference>
<dbReference type="GO" id="GO:0005634">
    <property type="term" value="C:nucleus"/>
    <property type="evidence" value="ECO:0000314"/>
    <property type="project" value="LIFEdb"/>
</dbReference>
<dbReference type="GO" id="GO:0004843">
    <property type="term" value="F:cysteine-type deubiquitinase activity"/>
    <property type="evidence" value="ECO:0000318"/>
    <property type="project" value="GO_Central"/>
</dbReference>
<dbReference type="GO" id="GO:0019785">
    <property type="term" value="F:ISG15-specific peptidase activity"/>
    <property type="evidence" value="ECO:0000269"/>
    <property type="project" value="Reactome"/>
</dbReference>
<dbReference type="GO" id="GO:0060090">
    <property type="term" value="F:molecular adaptor activity"/>
    <property type="evidence" value="ECO:0000314"/>
    <property type="project" value="UniProt"/>
</dbReference>
<dbReference type="GO" id="GO:0140374">
    <property type="term" value="P:antiviral innate immune response"/>
    <property type="evidence" value="ECO:0000314"/>
    <property type="project" value="UniProt"/>
</dbReference>
<dbReference type="GO" id="GO:0060339">
    <property type="term" value="P:negative regulation of type I interferon-mediated signaling pathway"/>
    <property type="evidence" value="ECO:0000314"/>
    <property type="project" value="UniProtKB"/>
</dbReference>
<dbReference type="GO" id="GO:0016579">
    <property type="term" value="P:protein deubiquitination"/>
    <property type="evidence" value="ECO:0000304"/>
    <property type="project" value="Reactome"/>
</dbReference>
<dbReference type="GO" id="GO:0006508">
    <property type="term" value="P:proteolysis"/>
    <property type="evidence" value="ECO:0007669"/>
    <property type="project" value="UniProtKB-KW"/>
</dbReference>
<dbReference type="GO" id="GO:0050727">
    <property type="term" value="P:regulation of inflammatory response"/>
    <property type="evidence" value="ECO:0000315"/>
    <property type="project" value="UniProtKB"/>
</dbReference>
<dbReference type="GO" id="GO:0031647">
    <property type="term" value="P:regulation of protein stability"/>
    <property type="evidence" value="ECO:0000318"/>
    <property type="project" value="GO_Central"/>
</dbReference>
<dbReference type="GO" id="GO:0009617">
    <property type="term" value="P:response to bacterium"/>
    <property type="evidence" value="ECO:0007669"/>
    <property type="project" value="Ensembl"/>
</dbReference>
<dbReference type="GO" id="GO:0035634">
    <property type="term" value="P:response to stilbenoid"/>
    <property type="evidence" value="ECO:0007669"/>
    <property type="project" value="Ensembl"/>
</dbReference>
<dbReference type="FunFam" id="3.90.70.10:FF:000088">
    <property type="entry name" value="Ubl carboxyl-terminal hydrolase 18"/>
    <property type="match status" value="1"/>
</dbReference>
<dbReference type="Gene3D" id="3.90.70.10">
    <property type="entry name" value="Cysteine proteinases"/>
    <property type="match status" value="1"/>
</dbReference>
<dbReference type="InterPro" id="IPR038765">
    <property type="entry name" value="Papain-like_cys_pep_sf"/>
</dbReference>
<dbReference type="InterPro" id="IPR050164">
    <property type="entry name" value="Peptidase_C19"/>
</dbReference>
<dbReference type="InterPro" id="IPR001394">
    <property type="entry name" value="Peptidase_C19_UCH"/>
</dbReference>
<dbReference type="InterPro" id="IPR018200">
    <property type="entry name" value="USP_CS"/>
</dbReference>
<dbReference type="InterPro" id="IPR028889">
    <property type="entry name" value="USP_dom"/>
</dbReference>
<dbReference type="PANTHER" id="PTHR24006">
    <property type="entry name" value="UBIQUITIN CARBOXYL-TERMINAL HYDROLASE"/>
    <property type="match status" value="1"/>
</dbReference>
<dbReference type="PANTHER" id="PTHR24006:SF796">
    <property type="entry name" value="UBL CARBOXYL-TERMINAL HYDROLASE 18-RELATED"/>
    <property type="match status" value="1"/>
</dbReference>
<dbReference type="Pfam" id="PF00443">
    <property type="entry name" value="UCH"/>
    <property type="match status" value="1"/>
</dbReference>
<dbReference type="SUPFAM" id="SSF54001">
    <property type="entry name" value="Cysteine proteinases"/>
    <property type="match status" value="1"/>
</dbReference>
<dbReference type="PROSITE" id="PS00972">
    <property type="entry name" value="USP_1"/>
    <property type="match status" value="1"/>
</dbReference>
<dbReference type="PROSITE" id="PS00973">
    <property type="entry name" value="USP_2"/>
    <property type="match status" value="1"/>
</dbReference>
<dbReference type="PROSITE" id="PS50235">
    <property type="entry name" value="USP_3"/>
    <property type="match status" value="1"/>
</dbReference>
<comment type="function">
    <text evidence="6 8 9 10 11">Interferon-induced ISG15-specific protease that plays a crucial role for maintaining a proper balance of ISG15-conjugated proteins in cells (PubMed:11788588). Regulates protein ISGylation by efficiently cleaving ISG15 conjugates linked via isopeptide bonds. Regulates T-cell activation and T-helper 17 (Th17) cell differentiation by deubiquitinating TAK1, likely to keep TAK1-TAB complexes in steady conditions (PubMed:23825189). In turn, restricts activation of NF-kappa-B, NFAT, and JNK as well as expression of IL2 in T-cells after TCR activation (PubMed:23825189). Acts as a molecular adapter with USP20 to promote innate antiviral response through deubiquitinating STING1 (PubMed:27801882). Involved also in the negative regulation of the inflammatory response triggered by type I interferon (PubMed:27325888, PubMed:28165510). Upon recruitment by STAT2 to the type I interferon receptor subunit IFNAR2 interferes with the assembly of the ternary interferon-IFNAR1-IFNAR2 complex and acts as a negative regulator of the type I interferon signaling pathway (PubMed:28165510).</text>
</comment>
<comment type="function">
    <molecule>Isoform 2</molecule>
    <text evidence="7">Has enzymatic activity similar to isoform 1 and interferes with type I interferon signaling. Major deISGylation enzyme for nuclear proteins (PubMed:22170061).</text>
</comment>
<comment type="catalytic activity">
    <reaction evidence="10">
        <text>Thiol-dependent hydrolysis of ester, thioester, amide, peptide and isopeptide bonds formed by the C-terminal Gly of ubiquitin (a 76-residue protein attached to proteins as an intracellular targeting signal).</text>
        <dbReference type="EC" id="3.4.19.12"/>
    </reaction>
</comment>
<comment type="subunit">
    <text evidence="11 12 13">Interacts with STAT2; the interaction is direct (PubMed:28165510, PubMed:31836668, PubMed:32092142). Interacts with IFNAR2; indirectly via STAT2, it negatively regulates the assembly of the ternary interferon-IFNAR1-IFNAR2 complex and inhibits type I interferon signaling (PubMed:28165510). Interacts with STING1. Interacts with USP20.</text>
</comment>
<comment type="interaction">
    <interactant intactId="EBI-356206">
        <id>Q9UMW8</id>
    </interactant>
    <interactant intactId="EBI-466029">
        <id>P42858</id>
        <label>HTT</label>
    </interactant>
    <organismsDiffer>false</organismsDiffer>
    <experiments>3</experiments>
</comment>
<comment type="interaction">
    <interactant intactId="EBI-356206">
        <id>Q9UMW8</id>
    </interactant>
    <interactant intactId="EBI-958408">
        <id>P48551</id>
        <label>IFNAR2</label>
    </interactant>
    <organismsDiffer>false</organismsDiffer>
    <experiments>4</experiments>
</comment>
<comment type="interaction">
    <interactant intactId="EBI-356206">
        <id>Q9UMW8</id>
    </interactant>
    <interactant intactId="EBI-746466">
        <id>P05161</id>
        <label>ISG15</label>
    </interactant>
    <organismsDiffer>false</organismsDiffer>
    <experiments>9</experiments>
</comment>
<comment type="subcellular location">
    <molecule>Isoform 1</molecule>
    <subcellularLocation>
        <location evidence="7">Cytoplasm</location>
    </subcellularLocation>
</comment>
<comment type="subcellular location">
    <molecule>Isoform 2</molecule>
    <subcellularLocation>
        <location evidence="7">Nucleus</location>
    </subcellularLocation>
    <subcellularLocation>
        <location evidence="7">Cytoplasm</location>
    </subcellularLocation>
</comment>
<comment type="alternative products">
    <event type="alternative initiation"/>
    <isoform>
        <id>Q9UMW8-1</id>
        <name>1</name>
        <sequence type="displayed"/>
    </isoform>
    <isoform>
        <id>Q9UMW8-2</id>
        <name>2</name>
        <name>USP18-sf</name>
        <sequence type="described" ref="VSP_055236"/>
    </isoform>
</comment>
<comment type="induction">
    <text evidence="5">By type I interferon, predominantly IFN-beta.</text>
</comment>
<comment type="disease" evidence="9">
    <disease id="DI-04973">
        <name>Pseudo-TORCH syndrome 2</name>
        <acronym>PTORCH2</acronym>
        <description>An autosomal recessive multisystem disorder characterized by antenatal onset of intracranial hemorrhage, calcification, brain malformations, liver dysfunction, and often thrombocytopenia. Affected individuals tend to have respiratory insufficiency and seizures, and die in infancy. The phenotype resembles the sequelae of intrauterine infection, but there is no evidence of an infectious agent.</description>
        <dbReference type="MIM" id="617397"/>
    </disease>
    <text>The disease is caused by variants affecting the gene represented in this entry.</text>
</comment>
<comment type="miscellaneous">
    <molecule>Isoform 2</molecule>
    <text evidence="15">Produced by alternative initiation at a CTG start codon. An IRES Element in the 5' region contributes to expression.</text>
</comment>
<comment type="similarity">
    <text evidence="15">Belongs to the peptidase C19 family.</text>
</comment>
<accession>Q9UMW8</accession>
<accession>Q53Y90</accession>
<accession>Q6IAD9</accession>
<accession>Q9NY71</accession>
<gene>
    <name type="primary">USP18</name>
    <name type="synonym">ISG43</name>
</gene>
<keyword id="KW-0024">Alternative initiation</keyword>
<keyword id="KW-0963">Cytoplasm</keyword>
<keyword id="KW-0378">Hydrolase</keyword>
<keyword id="KW-0539">Nucleus</keyword>
<keyword id="KW-0645">Protease</keyword>
<keyword id="KW-1267">Proteomics identification</keyword>
<keyword id="KW-1185">Reference proteome</keyword>
<keyword id="KW-0788">Thiol protease</keyword>
<keyword id="KW-0833">Ubl conjugation pathway</keyword>
<sequence>MSKAFGLLRQICQSILAESSQSPADLEEKKEEDSNMKREQPRERPRAWDYPHGLVGLHNIGQTCCLNSLIQVFVMNVDFTRILKRITVPRGADEQRRSVPFQMLLLLEKMQDSRQKAVRPLELAYCLQKCNVPLFVQHDAAQLYLKLWNLIKDQITDVHLVERLQALYTIRVKDSLICVDCAMESSRNSSMLTLPLSLFDVDSKPLKTLEDALHCFFQPRELSSKSKCFCENCGKKTRGKQVLKLTHLPQTLTIHLMRFSIRNSQTRKICHSLYFPQSLDFSQILPMKRESCDAEEQSGGQYELFAVIAHVGMADSGHYCVYIRNAVDGKWFCFNDSNICLVSWEDIQCTYGNPNYHWQETAYLLVYMKMEC</sequence>